<evidence type="ECO:0000250" key="1"/>
<evidence type="ECO:0000305" key="2"/>
<proteinExistence type="inferred from homology"/>
<dbReference type="EC" id="4.6.1.18"/>
<dbReference type="EMBL" id="AJ315462">
    <property type="protein sequence ID" value="CAC86443.1"/>
    <property type="molecule type" value="Genomic_DNA"/>
</dbReference>
<dbReference type="RefSeq" id="NP_001013250.1">
    <property type="nucleotide sequence ID" value="NM_001013232.1"/>
</dbReference>
<dbReference type="SMR" id="Q8VD88"/>
<dbReference type="FunCoup" id="Q8VD88">
    <property type="interactions" value="4"/>
</dbReference>
<dbReference type="STRING" id="10116.ENSRNOP00000035095"/>
<dbReference type="iPTMnet" id="Q8VD88"/>
<dbReference type="PhosphoSitePlus" id="Q8VD88"/>
<dbReference type="PaxDb" id="10116-ENSRNOP00000035095"/>
<dbReference type="GeneID" id="364303"/>
<dbReference type="KEGG" id="rno:364303"/>
<dbReference type="UCSC" id="RGD:1310106">
    <property type="organism name" value="rat"/>
</dbReference>
<dbReference type="AGR" id="RGD:1310106"/>
<dbReference type="CTD" id="364303"/>
<dbReference type="RGD" id="1310106">
    <property type="gene designation" value="Rnase1"/>
</dbReference>
<dbReference type="eggNOG" id="ENOG502SQ4K">
    <property type="taxonomic scope" value="Eukaryota"/>
</dbReference>
<dbReference type="InParanoid" id="Q8VD88"/>
<dbReference type="OrthoDB" id="8573660at2759"/>
<dbReference type="PhylomeDB" id="Q8VD88"/>
<dbReference type="PRO" id="PR:Q8VD88"/>
<dbReference type="Proteomes" id="UP000002494">
    <property type="component" value="Unplaced"/>
</dbReference>
<dbReference type="GO" id="GO:0005576">
    <property type="term" value="C:extracellular region"/>
    <property type="evidence" value="ECO:0007669"/>
    <property type="project" value="UniProtKB-SubCell"/>
</dbReference>
<dbReference type="GO" id="GO:0016829">
    <property type="term" value="F:lyase activity"/>
    <property type="evidence" value="ECO:0007669"/>
    <property type="project" value="UniProtKB-KW"/>
</dbReference>
<dbReference type="GO" id="GO:0003676">
    <property type="term" value="F:nucleic acid binding"/>
    <property type="evidence" value="ECO:0007669"/>
    <property type="project" value="InterPro"/>
</dbReference>
<dbReference type="GO" id="GO:0004522">
    <property type="term" value="F:ribonuclease A activity"/>
    <property type="evidence" value="ECO:0007669"/>
    <property type="project" value="UniProtKB-EC"/>
</dbReference>
<dbReference type="GO" id="GO:0004540">
    <property type="term" value="F:RNA nuclease activity"/>
    <property type="evidence" value="ECO:0000318"/>
    <property type="project" value="GO_Central"/>
</dbReference>
<dbReference type="GO" id="GO:0050830">
    <property type="term" value="P:defense response to Gram-positive bacterium"/>
    <property type="evidence" value="ECO:0000318"/>
    <property type="project" value="GO_Central"/>
</dbReference>
<dbReference type="CDD" id="cd06265">
    <property type="entry name" value="RNase_A_canonical"/>
    <property type="match status" value="1"/>
</dbReference>
<dbReference type="FunFam" id="3.10.130.10:FF:000001">
    <property type="entry name" value="Ribonuclease pancreatic"/>
    <property type="match status" value="1"/>
</dbReference>
<dbReference type="Gene3D" id="3.10.130.10">
    <property type="entry name" value="Ribonuclease A-like domain"/>
    <property type="match status" value="1"/>
</dbReference>
<dbReference type="InterPro" id="IPR001427">
    <property type="entry name" value="RNaseA"/>
</dbReference>
<dbReference type="InterPro" id="IPR036816">
    <property type="entry name" value="RNaseA-like_dom_sf"/>
</dbReference>
<dbReference type="InterPro" id="IPR023411">
    <property type="entry name" value="RNaseA_AS"/>
</dbReference>
<dbReference type="InterPro" id="IPR023412">
    <property type="entry name" value="RNaseA_domain"/>
</dbReference>
<dbReference type="PANTHER" id="PTHR11437">
    <property type="entry name" value="RIBONUCLEASE"/>
    <property type="match status" value="1"/>
</dbReference>
<dbReference type="PANTHER" id="PTHR11437:SF24">
    <property type="entry name" value="RIBONUCLEASE PANCREATIC"/>
    <property type="match status" value="1"/>
</dbReference>
<dbReference type="Pfam" id="PF00074">
    <property type="entry name" value="RnaseA"/>
    <property type="match status" value="1"/>
</dbReference>
<dbReference type="PRINTS" id="PR00794">
    <property type="entry name" value="RIBONUCLEASE"/>
</dbReference>
<dbReference type="SMART" id="SM00092">
    <property type="entry name" value="RNAse_Pc"/>
    <property type="match status" value="1"/>
</dbReference>
<dbReference type="SUPFAM" id="SSF54076">
    <property type="entry name" value="RNase A-like"/>
    <property type="match status" value="1"/>
</dbReference>
<dbReference type="PROSITE" id="PS00127">
    <property type="entry name" value="RNASE_PANCREATIC"/>
    <property type="match status" value="1"/>
</dbReference>
<reference key="1">
    <citation type="journal article" date="2002" name="J. Mol. Evol.">
        <title>Pancreatic-type ribonuclease 1 gene duplications in rat species.</title>
        <authorList>
            <person name="Dubois J.-Y.F."/>
            <person name="Jekel P.A."/>
            <person name="Mulder P.P.M.F.A."/>
            <person name="Bussink A.P."/>
            <person name="Catzeflis F.M."/>
            <person name="Carsana A."/>
            <person name="Beintema J.J."/>
        </authorList>
    </citation>
    <scope>NUCLEOTIDE SEQUENCE [GENOMIC DNA]</scope>
</reference>
<accession>Q8VD88</accession>
<keyword id="KW-1015">Disulfide bond</keyword>
<keyword id="KW-0255">Endonuclease</keyword>
<keyword id="KW-0378">Hydrolase</keyword>
<keyword id="KW-0456">Lyase</keyword>
<keyword id="KW-0540">Nuclease</keyword>
<keyword id="KW-1185">Reference proteome</keyword>
<keyword id="KW-0964">Secreted</keyword>
<keyword id="KW-0732">Signal</keyword>
<feature type="signal peptide" evidence="1">
    <location>
        <begin position="1"/>
        <end position="25"/>
    </location>
</feature>
<feature type="chain" id="PRO_0000234934" description="Ribonuclease pancreatic delta-type">
    <location>
        <begin position="26"/>
        <end position="150"/>
    </location>
</feature>
<feature type="active site" description="Proton acceptor" evidence="1">
    <location>
        <position position="37"/>
    </location>
</feature>
<feature type="active site" description="Proton donor" evidence="1">
    <location>
        <position position="145"/>
    </location>
</feature>
<feature type="binding site" evidence="1">
    <location>
        <position position="35"/>
    </location>
    <ligand>
        <name>substrate</name>
    </ligand>
</feature>
<feature type="binding site" evidence="1">
    <location>
        <begin position="66"/>
        <end position="70"/>
    </location>
    <ligand>
        <name>substrate</name>
    </ligand>
</feature>
<feature type="binding site" evidence="1">
    <location>
        <position position="91"/>
    </location>
    <ligand>
        <name>substrate</name>
    </ligand>
</feature>
<feature type="binding site" evidence="1">
    <location>
        <position position="111"/>
    </location>
    <ligand>
        <name>substrate</name>
    </ligand>
</feature>
<feature type="disulfide bond" evidence="1">
    <location>
        <begin position="51"/>
        <end position="110"/>
    </location>
</feature>
<feature type="disulfide bond" evidence="1">
    <location>
        <begin position="65"/>
        <end position="121"/>
    </location>
</feature>
<feature type="disulfide bond" evidence="1">
    <location>
        <begin position="83"/>
        <end position="136"/>
    </location>
</feature>
<feature type="disulfide bond" evidence="1">
    <location>
        <begin position="90"/>
        <end position="98"/>
    </location>
</feature>
<comment type="function">
    <text evidence="1">Endonuclease that catalyzes the cleavage of RNA on the 3' side of pyrimidine nucleotides. Acts on single-stranded and double-stranded RNA (By similarity).</text>
</comment>
<comment type="catalytic activity">
    <reaction>
        <text>an [RNA] containing cytidine + H2O = an [RNA]-3'-cytidine-3'-phosphate + a 5'-hydroxy-ribonucleotide-3'-[RNA].</text>
        <dbReference type="EC" id="4.6.1.18"/>
    </reaction>
</comment>
<comment type="catalytic activity">
    <reaction>
        <text>an [RNA] containing uridine + H2O = an [RNA]-3'-uridine-3'-phosphate + a 5'-hydroxy-ribonucleotide-3'-[RNA].</text>
        <dbReference type="EC" id="4.6.1.18"/>
    </reaction>
</comment>
<comment type="subunit">
    <text evidence="1">Monomer.</text>
</comment>
<comment type="subcellular location">
    <subcellularLocation>
        <location evidence="1">Secreted</location>
    </subcellularLocation>
</comment>
<comment type="similarity">
    <text evidence="2">Belongs to the pancreatic ribonuclease family.</text>
</comment>
<organism>
    <name type="scientific">Rattus norvegicus</name>
    <name type="common">Rat</name>
    <dbReference type="NCBI Taxonomy" id="10116"/>
    <lineage>
        <taxon>Eukaryota</taxon>
        <taxon>Metazoa</taxon>
        <taxon>Chordata</taxon>
        <taxon>Craniata</taxon>
        <taxon>Vertebrata</taxon>
        <taxon>Euteleostomi</taxon>
        <taxon>Mammalia</taxon>
        <taxon>Eutheria</taxon>
        <taxon>Euarchontoglires</taxon>
        <taxon>Glires</taxon>
        <taxon>Rodentia</taxon>
        <taxon>Myomorpha</taxon>
        <taxon>Muroidea</taxon>
        <taxon>Muridae</taxon>
        <taxon>Murinae</taxon>
        <taxon>Rattus</taxon>
    </lineage>
</organism>
<name>RNS1D_RAT</name>
<gene>
    <name type="primary">Rnase1d</name>
    <name type="synonym">Rnase1</name>
</gene>
<protein>
    <recommendedName>
        <fullName>Ribonuclease pancreatic delta-type</fullName>
        <ecNumber>4.6.1.18</ecNumber>
    </recommendedName>
    <alternativeName>
        <fullName>RNase 1 delta</fullName>
    </alternativeName>
</protein>
<sequence length="150" mass="16936">MGLEKSFILFSLLVLVLGWVQPSLGRKPSVQDFKRQHMDPDSPPNSRPTYCNQMMKRRGMTKGSCKRVNTFLHESWATVKAICSQRQMTCKTSSRNNCHKSSSTLHITDCRLKGSSKYPNCDYTTTNSQKHIIIACEGNPLVPVHFDASV</sequence>